<dbReference type="EC" id="3.1.3.11" evidence="1"/>
<dbReference type="EMBL" id="FM200053">
    <property type="protein sequence ID" value="CAR62221.1"/>
    <property type="molecule type" value="Genomic_DNA"/>
</dbReference>
<dbReference type="RefSeq" id="WP_000853764.1">
    <property type="nucleotide sequence ID" value="NC_011147.1"/>
</dbReference>
<dbReference type="SMR" id="B5BKN5"/>
<dbReference type="KEGG" id="sek:SSPA3934"/>
<dbReference type="HOGENOM" id="CLU_039977_2_2_6"/>
<dbReference type="UniPathway" id="UPA00138"/>
<dbReference type="Proteomes" id="UP000001869">
    <property type="component" value="Chromosome"/>
</dbReference>
<dbReference type="GO" id="GO:0005829">
    <property type="term" value="C:cytosol"/>
    <property type="evidence" value="ECO:0007669"/>
    <property type="project" value="TreeGrafter"/>
</dbReference>
<dbReference type="GO" id="GO:0042132">
    <property type="term" value="F:fructose 1,6-bisphosphate 1-phosphatase activity"/>
    <property type="evidence" value="ECO:0007669"/>
    <property type="project" value="UniProtKB-UniRule"/>
</dbReference>
<dbReference type="GO" id="GO:0000287">
    <property type="term" value="F:magnesium ion binding"/>
    <property type="evidence" value="ECO:0007669"/>
    <property type="project" value="UniProtKB-UniRule"/>
</dbReference>
<dbReference type="GO" id="GO:0030388">
    <property type="term" value="P:fructose 1,6-bisphosphate metabolic process"/>
    <property type="evidence" value="ECO:0007669"/>
    <property type="project" value="TreeGrafter"/>
</dbReference>
<dbReference type="GO" id="GO:0006002">
    <property type="term" value="P:fructose 6-phosphate metabolic process"/>
    <property type="evidence" value="ECO:0007669"/>
    <property type="project" value="TreeGrafter"/>
</dbReference>
<dbReference type="GO" id="GO:0006000">
    <property type="term" value="P:fructose metabolic process"/>
    <property type="evidence" value="ECO:0007669"/>
    <property type="project" value="TreeGrafter"/>
</dbReference>
<dbReference type="GO" id="GO:0006094">
    <property type="term" value="P:gluconeogenesis"/>
    <property type="evidence" value="ECO:0007669"/>
    <property type="project" value="UniProtKB-UniRule"/>
</dbReference>
<dbReference type="GO" id="GO:0005986">
    <property type="term" value="P:sucrose biosynthetic process"/>
    <property type="evidence" value="ECO:0007669"/>
    <property type="project" value="TreeGrafter"/>
</dbReference>
<dbReference type="CDD" id="cd00354">
    <property type="entry name" value="FBPase"/>
    <property type="match status" value="1"/>
</dbReference>
<dbReference type="FunFam" id="3.30.540.10:FF:000002">
    <property type="entry name" value="Fructose-1,6-bisphosphatase class 1"/>
    <property type="match status" value="1"/>
</dbReference>
<dbReference type="FunFam" id="3.40.190.80:FF:000001">
    <property type="entry name" value="Fructose-1,6-bisphosphatase class 1"/>
    <property type="match status" value="1"/>
</dbReference>
<dbReference type="Gene3D" id="3.40.190.80">
    <property type="match status" value="1"/>
</dbReference>
<dbReference type="Gene3D" id="3.30.540.10">
    <property type="entry name" value="Fructose-1,6-Bisphosphatase, subunit A, domain 1"/>
    <property type="match status" value="1"/>
</dbReference>
<dbReference type="HAMAP" id="MF_01855">
    <property type="entry name" value="FBPase_class1"/>
    <property type="match status" value="1"/>
</dbReference>
<dbReference type="InterPro" id="IPR044015">
    <property type="entry name" value="FBPase_C_dom"/>
</dbReference>
<dbReference type="InterPro" id="IPR000146">
    <property type="entry name" value="FBPase_class-1"/>
</dbReference>
<dbReference type="InterPro" id="IPR033391">
    <property type="entry name" value="FBPase_N"/>
</dbReference>
<dbReference type="InterPro" id="IPR028343">
    <property type="entry name" value="FBPtase"/>
</dbReference>
<dbReference type="InterPro" id="IPR020548">
    <property type="entry name" value="Fructose_bisphosphatase_AS"/>
</dbReference>
<dbReference type="NCBIfam" id="NF006778">
    <property type="entry name" value="PRK09293.1-1"/>
    <property type="match status" value="1"/>
</dbReference>
<dbReference type="NCBIfam" id="NF006779">
    <property type="entry name" value="PRK09293.1-3"/>
    <property type="match status" value="1"/>
</dbReference>
<dbReference type="PANTHER" id="PTHR11556">
    <property type="entry name" value="FRUCTOSE-1,6-BISPHOSPHATASE-RELATED"/>
    <property type="match status" value="1"/>
</dbReference>
<dbReference type="PANTHER" id="PTHR11556:SF35">
    <property type="entry name" value="SEDOHEPTULOSE-1,7-BISPHOSPHATASE, CHLOROPLASTIC"/>
    <property type="match status" value="1"/>
</dbReference>
<dbReference type="Pfam" id="PF00316">
    <property type="entry name" value="FBPase"/>
    <property type="match status" value="1"/>
</dbReference>
<dbReference type="Pfam" id="PF18913">
    <property type="entry name" value="FBPase_C"/>
    <property type="match status" value="1"/>
</dbReference>
<dbReference type="PIRSF" id="PIRSF500210">
    <property type="entry name" value="FBPtase"/>
    <property type="match status" value="1"/>
</dbReference>
<dbReference type="PIRSF" id="PIRSF000904">
    <property type="entry name" value="FBPtase_SBPase"/>
    <property type="match status" value="1"/>
</dbReference>
<dbReference type="PRINTS" id="PR00115">
    <property type="entry name" value="F16BPHPHTASE"/>
</dbReference>
<dbReference type="SUPFAM" id="SSF56655">
    <property type="entry name" value="Carbohydrate phosphatase"/>
    <property type="match status" value="1"/>
</dbReference>
<dbReference type="PROSITE" id="PS00124">
    <property type="entry name" value="FBPASE"/>
    <property type="match status" value="1"/>
</dbReference>
<proteinExistence type="inferred from homology"/>
<name>F16PA_SALPK</name>
<protein>
    <recommendedName>
        <fullName evidence="1">Fructose-1,6-bisphosphatase class 1</fullName>
        <shortName evidence="1">FBPase class 1</shortName>
        <ecNumber evidence="1">3.1.3.11</ecNumber>
    </recommendedName>
    <alternativeName>
        <fullName evidence="1">D-fructose-1,6-bisphosphate 1-phosphohydrolase class 1</fullName>
    </alternativeName>
</protein>
<organism>
    <name type="scientific">Salmonella paratyphi A (strain AKU_12601)</name>
    <dbReference type="NCBI Taxonomy" id="554290"/>
    <lineage>
        <taxon>Bacteria</taxon>
        <taxon>Pseudomonadati</taxon>
        <taxon>Pseudomonadota</taxon>
        <taxon>Gammaproteobacteria</taxon>
        <taxon>Enterobacterales</taxon>
        <taxon>Enterobacteriaceae</taxon>
        <taxon>Salmonella</taxon>
    </lineage>
</organism>
<sequence>MKTLGEFIVEKQHEFSQATGELTALLSAIKLGAKIIHRDINKAGLVDILGASGAENVQGEVQQKLDLFANEKLKAALKARDIVAGIASEEEDEIVVFEGCEHAKYVVLMDPLDGSSNIDVNVSVGTIFSIYRRVTPVGTPVTEEDFLQPGNKQVAAGYVVYGSSTMLVYTTGCGVHAFTYDPSLGVFCLCQERMRFPEKGKTYSINEGNYIKFPNGVKKYIKFCQEEDSSTSRPYTSRYIGSLVADFHRNLLKGGIYLYPSTASHPQGKLRLLYECNPMAFLAEQAGGKASDGKERILDIIPESLHQRRSFFVGNRHMVDDVERFIREYPDA</sequence>
<gene>
    <name evidence="1" type="primary">fbp</name>
    <name type="ordered locus">SSPA3934</name>
</gene>
<feature type="chain" id="PRO_0000364693" description="Fructose-1,6-bisphosphatase class 1">
    <location>
        <begin position="1"/>
        <end position="332"/>
    </location>
</feature>
<feature type="binding site" evidence="1">
    <location>
        <position position="89"/>
    </location>
    <ligand>
        <name>Mg(2+)</name>
        <dbReference type="ChEBI" id="CHEBI:18420"/>
        <label>1</label>
    </ligand>
</feature>
<feature type="binding site" evidence="1">
    <location>
        <position position="110"/>
    </location>
    <ligand>
        <name>Mg(2+)</name>
        <dbReference type="ChEBI" id="CHEBI:18420"/>
        <label>1</label>
    </ligand>
</feature>
<feature type="binding site" evidence="1">
    <location>
        <position position="110"/>
    </location>
    <ligand>
        <name>Mg(2+)</name>
        <dbReference type="ChEBI" id="CHEBI:18420"/>
        <label>2</label>
    </ligand>
</feature>
<feature type="binding site" evidence="1">
    <location>
        <position position="112"/>
    </location>
    <ligand>
        <name>Mg(2+)</name>
        <dbReference type="ChEBI" id="CHEBI:18420"/>
        <label>1</label>
    </ligand>
</feature>
<feature type="binding site" evidence="1">
    <location>
        <begin position="113"/>
        <end position="116"/>
    </location>
    <ligand>
        <name>substrate</name>
    </ligand>
</feature>
<feature type="binding site" evidence="1">
    <location>
        <position position="113"/>
    </location>
    <ligand>
        <name>Mg(2+)</name>
        <dbReference type="ChEBI" id="CHEBI:18420"/>
        <label>2</label>
    </ligand>
</feature>
<feature type="binding site" evidence="1">
    <location>
        <position position="206"/>
    </location>
    <ligand>
        <name>substrate</name>
    </ligand>
</feature>
<feature type="binding site" evidence="1">
    <location>
        <position position="239"/>
    </location>
    <ligand>
        <name>substrate</name>
    </ligand>
</feature>
<feature type="binding site" evidence="1">
    <location>
        <begin position="257"/>
        <end position="259"/>
    </location>
    <ligand>
        <name>substrate</name>
    </ligand>
</feature>
<feature type="binding site" evidence="1">
    <location>
        <position position="269"/>
    </location>
    <ligand>
        <name>substrate</name>
    </ligand>
</feature>
<feature type="binding site" evidence="1">
    <location>
        <position position="275"/>
    </location>
    <ligand>
        <name>Mg(2+)</name>
        <dbReference type="ChEBI" id="CHEBI:18420"/>
        <label>2</label>
    </ligand>
</feature>
<evidence type="ECO:0000255" key="1">
    <source>
        <dbReference type="HAMAP-Rule" id="MF_01855"/>
    </source>
</evidence>
<comment type="catalytic activity">
    <reaction evidence="1">
        <text>beta-D-fructose 1,6-bisphosphate + H2O = beta-D-fructose 6-phosphate + phosphate</text>
        <dbReference type="Rhea" id="RHEA:11064"/>
        <dbReference type="ChEBI" id="CHEBI:15377"/>
        <dbReference type="ChEBI" id="CHEBI:32966"/>
        <dbReference type="ChEBI" id="CHEBI:43474"/>
        <dbReference type="ChEBI" id="CHEBI:57634"/>
        <dbReference type="EC" id="3.1.3.11"/>
    </reaction>
</comment>
<comment type="cofactor">
    <cofactor evidence="1">
        <name>Mg(2+)</name>
        <dbReference type="ChEBI" id="CHEBI:18420"/>
    </cofactor>
    <text evidence="1">Binds 2 magnesium ions per subunit.</text>
</comment>
<comment type="pathway">
    <text evidence="1">Carbohydrate biosynthesis; gluconeogenesis.</text>
</comment>
<comment type="subunit">
    <text evidence="1">Homotetramer.</text>
</comment>
<comment type="subcellular location">
    <subcellularLocation>
        <location evidence="1">Cytoplasm</location>
    </subcellularLocation>
</comment>
<comment type="similarity">
    <text evidence="1">Belongs to the FBPase class 1 family.</text>
</comment>
<accession>B5BKN5</accession>
<reference key="1">
    <citation type="journal article" date="2009" name="BMC Genomics">
        <title>Pseudogene accumulation in the evolutionary histories of Salmonella enterica serovars Paratyphi A and Typhi.</title>
        <authorList>
            <person name="Holt K.E."/>
            <person name="Thomson N.R."/>
            <person name="Wain J."/>
            <person name="Langridge G.C."/>
            <person name="Hasan R."/>
            <person name="Bhutta Z.A."/>
            <person name="Quail M.A."/>
            <person name="Norbertczak H."/>
            <person name="Walker D."/>
            <person name="Simmonds M."/>
            <person name="White B."/>
            <person name="Bason N."/>
            <person name="Mungall K."/>
            <person name="Dougan G."/>
            <person name="Parkhill J."/>
        </authorList>
    </citation>
    <scope>NUCLEOTIDE SEQUENCE [LARGE SCALE GENOMIC DNA]</scope>
    <source>
        <strain>AKU_12601</strain>
    </source>
</reference>
<keyword id="KW-0119">Carbohydrate metabolism</keyword>
<keyword id="KW-0963">Cytoplasm</keyword>
<keyword id="KW-0378">Hydrolase</keyword>
<keyword id="KW-0460">Magnesium</keyword>
<keyword id="KW-0479">Metal-binding</keyword>